<feature type="signal peptide" evidence="2">
    <location>
        <begin position="1"/>
        <end position="19"/>
    </location>
</feature>
<feature type="chain" id="PRO_0000006280" description="Cysteine-rich venom protein natrin-2">
    <location>
        <begin position="20"/>
        <end position="238"/>
    </location>
</feature>
<feature type="domain" description="SCP">
    <location>
        <begin position="38"/>
        <end position="164"/>
    </location>
</feature>
<feature type="domain" description="ShKT" evidence="1">
    <location>
        <begin position="200"/>
        <end position="233"/>
    </location>
</feature>
<feature type="disulfide bond" evidence="1">
    <location>
        <begin position="75"/>
        <end position="153"/>
    </location>
</feature>
<feature type="disulfide bond" evidence="1">
    <location>
        <begin position="92"/>
        <end position="165"/>
    </location>
</feature>
<feature type="disulfide bond" evidence="1">
    <location>
        <begin position="148"/>
        <end position="162"/>
    </location>
</feature>
<feature type="disulfide bond" evidence="1">
    <location>
        <begin position="184"/>
        <end position="191"/>
    </location>
</feature>
<feature type="disulfide bond" evidence="1">
    <location>
        <begin position="187"/>
        <end position="196"/>
    </location>
</feature>
<feature type="disulfide bond" evidence="1">
    <location>
        <begin position="200"/>
        <end position="233"/>
    </location>
</feature>
<feature type="disulfide bond" evidence="1">
    <location>
        <begin position="209"/>
        <end position="227"/>
    </location>
</feature>
<feature type="disulfide bond" evidence="1">
    <location>
        <begin position="218"/>
        <end position="231"/>
    </location>
</feature>
<name>CRVP2_NAJAT</name>
<organism>
    <name type="scientific">Naja atra</name>
    <name type="common">Chinese cobra</name>
    <dbReference type="NCBI Taxonomy" id="8656"/>
    <lineage>
        <taxon>Eukaryota</taxon>
        <taxon>Metazoa</taxon>
        <taxon>Chordata</taxon>
        <taxon>Craniata</taxon>
        <taxon>Vertebrata</taxon>
        <taxon>Euteleostomi</taxon>
        <taxon>Lepidosauria</taxon>
        <taxon>Squamata</taxon>
        <taxon>Bifurcata</taxon>
        <taxon>Unidentata</taxon>
        <taxon>Episquamata</taxon>
        <taxon>Toxicofera</taxon>
        <taxon>Serpentes</taxon>
        <taxon>Colubroidea</taxon>
        <taxon>Elapidae</taxon>
        <taxon>Elapinae</taxon>
        <taxon>Naja</taxon>
    </lineage>
</organism>
<dbReference type="EMBL" id="AY261468">
    <property type="protein sequence ID" value="AAP20603.1"/>
    <property type="molecule type" value="mRNA"/>
</dbReference>
<dbReference type="SMR" id="Q7ZZN8"/>
<dbReference type="GO" id="GO:0005576">
    <property type="term" value="C:extracellular region"/>
    <property type="evidence" value="ECO:0007669"/>
    <property type="project" value="UniProtKB-SubCell"/>
</dbReference>
<dbReference type="GO" id="GO:0005246">
    <property type="term" value="F:calcium channel regulator activity"/>
    <property type="evidence" value="ECO:0007669"/>
    <property type="project" value="UniProtKB-KW"/>
</dbReference>
<dbReference type="GO" id="GO:0090729">
    <property type="term" value="F:toxin activity"/>
    <property type="evidence" value="ECO:0007669"/>
    <property type="project" value="UniProtKB-KW"/>
</dbReference>
<dbReference type="CDD" id="cd05383">
    <property type="entry name" value="CAP_CRISP"/>
    <property type="match status" value="1"/>
</dbReference>
<dbReference type="FunFam" id="1.10.10.740:FF:000001">
    <property type="entry name" value="Cysteine-rich secretory protein 2"/>
    <property type="match status" value="1"/>
</dbReference>
<dbReference type="FunFam" id="3.40.33.10:FF:000005">
    <property type="entry name" value="Cysteine-rich secretory protein 2"/>
    <property type="match status" value="1"/>
</dbReference>
<dbReference type="Gene3D" id="3.40.33.10">
    <property type="entry name" value="CAP"/>
    <property type="match status" value="1"/>
</dbReference>
<dbReference type="Gene3D" id="1.10.10.740">
    <property type="entry name" value="Crisp domain"/>
    <property type="match status" value="1"/>
</dbReference>
<dbReference type="InterPro" id="IPR018244">
    <property type="entry name" value="Allrgn_V5/Tpx1_CS"/>
</dbReference>
<dbReference type="InterPro" id="IPR014044">
    <property type="entry name" value="CAP_dom"/>
</dbReference>
<dbReference type="InterPro" id="IPR035940">
    <property type="entry name" value="CAP_sf"/>
</dbReference>
<dbReference type="InterPro" id="IPR042076">
    <property type="entry name" value="Crisp-like_dom"/>
</dbReference>
<dbReference type="InterPro" id="IPR001283">
    <property type="entry name" value="CRISP-related"/>
</dbReference>
<dbReference type="InterPro" id="IPR013871">
    <property type="entry name" value="Cysteine_rich_secretory"/>
</dbReference>
<dbReference type="InterPro" id="IPR034117">
    <property type="entry name" value="SCP_CRISP"/>
</dbReference>
<dbReference type="InterPro" id="IPR003582">
    <property type="entry name" value="ShKT_dom"/>
</dbReference>
<dbReference type="PANTHER" id="PTHR10334">
    <property type="entry name" value="CYSTEINE-RICH SECRETORY PROTEIN-RELATED"/>
    <property type="match status" value="1"/>
</dbReference>
<dbReference type="Pfam" id="PF00188">
    <property type="entry name" value="CAP"/>
    <property type="match status" value="1"/>
</dbReference>
<dbReference type="Pfam" id="PF08562">
    <property type="entry name" value="Crisp"/>
    <property type="match status" value="1"/>
</dbReference>
<dbReference type="PRINTS" id="PR00837">
    <property type="entry name" value="V5TPXLIKE"/>
</dbReference>
<dbReference type="SMART" id="SM00198">
    <property type="entry name" value="SCP"/>
    <property type="match status" value="1"/>
</dbReference>
<dbReference type="SUPFAM" id="SSF57546">
    <property type="entry name" value="Crisp domain-like"/>
    <property type="match status" value="1"/>
</dbReference>
<dbReference type="SUPFAM" id="SSF55797">
    <property type="entry name" value="PR-1-like"/>
    <property type="match status" value="1"/>
</dbReference>
<dbReference type="PROSITE" id="PS01009">
    <property type="entry name" value="CRISP_1"/>
    <property type="match status" value="1"/>
</dbReference>
<dbReference type="PROSITE" id="PS01010">
    <property type="entry name" value="CRISP_2"/>
    <property type="match status" value="1"/>
</dbReference>
<dbReference type="PROSITE" id="PS51670">
    <property type="entry name" value="SHKT"/>
    <property type="match status" value="1"/>
</dbReference>
<proteinExistence type="evidence at protein level"/>
<keyword id="KW-0108">Calcium channel impairing toxin</keyword>
<keyword id="KW-0903">Direct protein sequencing</keyword>
<keyword id="KW-1015">Disulfide bond</keyword>
<keyword id="KW-0872">Ion channel impairing toxin</keyword>
<keyword id="KW-0528">Neurotoxin</keyword>
<keyword id="KW-0964">Secreted</keyword>
<keyword id="KW-0732">Signal</keyword>
<keyword id="KW-0800">Toxin</keyword>
<reference key="1">
    <citation type="journal article" date="2003" name="Toxicon">
        <title>Purification and cloning of cysteine-rich proteins from Trimeresurus jerdonii and Naja atra venoms.</title>
        <authorList>
            <person name="Jin Y."/>
            <person name="Lu Q."/>
            <person name="Zhou X."/>
            <person name="Zhu S."/>
            <person name="Li R."/>
            <person name="Wang W."/>
            <person name="Xiong Y."/>
        </authorList>
    </citation>
    <scope>NUCLEOTIDE SEQUENCE [MRNA]</scope>
    <scope>PROTEIN SEQUENCE OF 20-52</scope>
    <source>
        <tissue>Venom</tissue>
        <tissue>Venom gland</tissue>
    </source>
</reference>
<reference key="2">
    <citation type="journal article" date="2005" name="Toxicon">
        <title>Purification and characterization of Taiwan cobra venom proteins with weak toxicity.</title>
        <authorList>
            <person name="Chang L.-S."/>
            <person name="Liou J.-C."/>
            <person name="Lin S.-R."/>
            <person name="Cheng Y.-C."/>
        </authorList>
    </citation>
    <scope>PROTEIN SEQUENCE OF 26-45</scope>
    <scope>AMINO-ACID COMPOSITION</scope>
    <scope>MASS SPECTROMETRY</scope>
    <source>
        <tissue>Venom</tissue>
    </source>
</reference>
<sequence>MIAFIVLLSLAAVLQQSSGTVDFASESSNKRENQKQIVDKHNALRRSVRPTARNMLQMEWNSNAAQNAKRWADRCSFAHSPPHLRTVGKIGCGENLFMSSQPYAWSRVIQSWYDENKKFVYGVGANPPGSVIGHYTQIVWYNSHLLGCGAAKCSSSKYLYVCQYCPTGNIIGSIATPYKSGPPCGDCPSACVNGLCTNPCKHHNVFSNCQSLAKQNACQTEWMKSKCAASCFCRTEII</sequence>
<accession>Q7ZZN8</accession>
<protein>
    <recommendedName>
        <fullName>Cysteine-rich venom protein natrin-2</fullName>
    </recommendedName>
    <alternativeName>
        <fullName>Cysteine-rich venom protein 2</fullName>
    </alternativeName>
    <alternativeName>
        <fullName>NA-CRVP2</fullName>
    </alternativeName>
    <alternativeName>
        <fullName>Protein G2b</fullName>
    </alternativeName>
</protein>
<evidence type="ECO:0000255" key="1">
    <source>
        <dbReference type="PROSITE-ProRule" id="PRU01005"/>
    </source>
</evidence>
<evidence type="ECO:0000269" key="2">
    <source>
    </source>
</evidence>
<evidence type="ECO:0000269" key="3">
    <source>
    </source>
</evidence>
<evidence type="ECO:0000305" key="4"/>
<comment type="function">
    <text>Inhibits carbachol-induced muscle contraction and weakly blocks muscle contraction evoked by potassium.</text>
</comment>
<comment type="subcellular location">
    <subcellularLocation>
        <location>Secreted</location>
    </subcellularLocation>
</comment>
<comment type="tissue specificity">
    <text>Expressed by the venom gland.</text>
</comment>
<comment type="mass spectrometry"/>
<comment type="similarity">
    <text evidence="4">Belongs to the CRISP family.</text>
</comment>